<feature type="chain" id="PRO_0000417072" description="CRISPR-associated endonuclease Cas1">
    <location>
        <begin position="1"/>
        <end position="316"/>
    </location>
</feature>
<feature type="binding site" evidence="1">
    <location>
        <position position="143"/>
    </location>
    <ligand>
        <name>Mn(2+)</name>
        <dbReference type="ChEBI" id="CHEBI:29035"/>
    </ligand>
</feature>
<feature type="binding site" evidence="1">
    <location>
        <position position="206"/>
    </location>
    <ligand>
        <name>Mn(2+)</name>
        <dbReference type="ChEBI" id="CHEBI:29035"/>
    </ligand>
</feature>
<feature type="binding site" evidence="1">
    <location>
        <position position="221"/>
    </location>
    <ligand>
        <name>Mn(2+)</name>
        <dbReference type="ChEBI" id="CHEBI:29035"/>
    </ligand>
</feature>
<feature type="strand" evidence="2">
    <location>
        <begin position="4"/>
        <end position="7"/>
    </location>
</feature>
<feature type="strand" evidence="2">
    <location>
        <begin position="11"/>
        <end position="16"/>
    </location>
</feature>
<feature type="strand" evidence="2">
    <location>
        <begin position="19"/>
        <end position="23"/>
    </location>
</feature>
<feature type="strand" evidence="2">
    <location>
        <begin position="28"/>
        <end position="31"/>
    </location>
</feature>
<feature type="helix" evidence="2">
    <location>
        <begin position="33"/>
        <end position="35"/>
    </location>
</feature>
<feature type="strand" evidence="2">
    <location>
        <begin position="37"/>
        <end position="41"/>
    </location>
</feature>
<feature type="strand" evidence="2">
    <location>
        <begin position="45"/>
        <end position="48"/>
    </location>
</feature>
<feature type="helix" evidence="2">
    <location>
        <begin position="49"/>
        <end position="58"/>
    </location>
</feature>
<feature type="strand" evidence="2">
    <location>
        <begin position="62"/>
        <end position="65"/>
    </location>
</feature>
<feature type="strand" evidence="2">
    <location>
        <begin position="71"/>
        <end position="77"/>
    </location>
</feature>
<feature type="helix" evidence="2">
    <location>
        <begin position="84"/>
        <end position="95"/>
    </location>
</feature>
<feature type="helix" evidence="2">
    <location>
        <begin position="97"/>
        <end position="119"/>
    </location>
</feature>
<feature type="helix" evidence="2">
    <location>
        <begin position="124"/>
        <end position="132"/>
    </location>
</feature>
<feature type="helix" evidence="2">
    <location>
        <begin position="136"/>
        <end position="158"/>
    </location>
</feature>
<feature type="helix" evidence="2">
    <location>
        <begin position="173"/>
        <end position="194"/>
    </location>
</feature>
<feature type="strand" evidence="2">
    <location>
        <begin position="204"/>
        <end position="206"/>
    </location>
</feature>
<feature type="helix" evidence="2">
    <location>
        <begin position="214"/>
        <end position="227"/>
    </location>
</feature>
<feature type="helix" evidence="2">
    <location>
        <begin position="229"/>
        <end position="237"/>
    </location>
</feature>
<feature type="helix" evidence="2">
    <location>
        <begin position="243"/>
        <end position="245"/>
    </location>
</feature>
<feature type="strand" evidence="2">
    <location>
        <begin position="246"/>
        <end position="249"/>
    </location>
</feature>
<feature type="strand" evidence="2">
    <location>
        <begin position="252"/>
        <end position="255"/>
    </location>
</feature>
<feature type="helix" evidence="2">
    <location>
        <begin position="257"/>
        <end position="272"/>
    </location>
</feature>
<feature type="strand" evidence="2">
    <location>
        <begin position="274"/>
        <end position="277"/>
    </location>
</feature>
<feature type="helix" evidence="2">
    <location>
        <begin position="278"/>
        <end position="280"/>
    </location>
</feature>
<feature type="strand" evidence="2">
    <location>
        <begin position="282"/>
        <end position="285"/>
    </location>
</feature>
<feature type="helix" evidence="2">
    <location>
        <begin position="286"/>
        <end position="301"/>
    </location>
</feature>
<feature type="helix" evidence="2">
    <location>
        <begin position="312"/>
        <end position="315"/>
    </location>
</feature>
<proteinExistence type="evidence at protein level"/>
<dbReference type="EC" id="3.1.-.-" evidence="1"/>
<dbReference type="EMBL" id="AE000657">
    <property type="protein sequence ID" value="AAC06657.1"/>
    <property type="molecule type" value="Genomic_DNA"/>
</dbReference>
<dbReference type="PIR" id="H70332">
    <property type="entry name" value="H70332"/>
</dbReference>
<dbReference type="RefSeq" id="NP_213252.1">
    <property type="nucleotide sequence ID" value="NC_000918.1"/>
</dbReference>
<dbReference type="RefSeq" id="WP_010880190.1">
    <property type="nucleotide sequence ID" value="NC_000918.1"/>
</dbReference>
<dbReference type="PDB" id="2YZS">
    <property type="method" value="X-ray"/>
    <property type="resolution" value="2.00 A"/>
    <property type="chains" value="A/B=2-316"/>
</dbReference>
<dbReference type="PDBsum" id="2YZS"/>
<dbReference type="SMR" id="O66692"/>
<dbReference type="STRING" id="224324.aq_369"/>
<dbReference type="EnsemblBacteria" id="AAC06657">
    <property type="protein sequence ID" value="AAC06657"/>
    <property type="gene ID" value="aq_369"/>
</dbReference>
<dbReference type="KEGG" id="aae:aq_369"/>
<dbReference type="PATRIC" id="fig|224324.8.peg.298"/>
<dbReference type="eggNOG" id="COG1518">
    <property type="taxonomic scope" value="Bacteria"/>
</dbReference>
<dbReference type="HOGENOM" id="CLU_052779_2_0_0"/>
<dbReference type="InParanoid" id="O66692"/>
<dbReference type="OrthoDB" id="9803119at2"/>
<dbReference type="EvolutionaryTrace" id="O66692"/>
<dbReference type="Proteomes" id="UP000000798">
    <property type="component" value="Chromosome"/>
</dbReference>
<dbReference type="GO" id="GO:0003677">
    <property type="term" value="F:DNA binding"/>
    <property type="evidence" value="ECO:0007669"/>
    <property type="project" value="UniProtKB-KW"/>
</dbReference>
<dbReference type="GO" id="GO:0004520">
    <property type="term" value="F:DNA endonuclease activity"/>
    <property type="evidence" value="ECO:0007669"/>
    <property type="project" value="InterPro"/>
</dbReference>
<dbReference type="GO" id="GO:0046872">
    <property type="term" value="F:metal ion binding"/>
    <property type="evidence" value="ECO:0007669"/>
    <property type="project" value="UniProtKB-UniRule"/>
</dbReference>
<dbReference type="GO" id="GO:0051607">
    <property type="term" value="P:defense response to virus"/>
    <property type="evidence" value="ECO:0007669"/>
    <property type="project" value="UniProtKB-UniRule"/>
</dbReference>
<dbReference type="GO" id="GO:0043571">
    <property type="term" value="P:maintenance of CRISPR repeat elements"/>
    <property type="evidence" value="ECO:0007669"/>
    <property type="project" value="UniProtKB-UniRule"/>
</dbReference>
<dbReference type="CDD" id="cd09722">
    <property type="entry name" value="Cas1_I-B"/>
    <property type="match status" value="1"/>
</dbReference>
<dbReference type="Gene3D" id="1.20.120.920">
    <property type="entry name" value="CRISPR-associated endonuclease Cas1, C-terminal domain"/>
    <property type="match status" value="1"/>
</dbReference>
<dbReference type="Gene3D" id="3.100.10.20">
    <property type="entry name" value="CRISPR-associated endonuclease Cas1, N-terminal domain"/>
    <property type="match status" value="1"/>
</dbReference>
<dbReference type="HAMAP" id="MF_01470">
    <property type="entry name" value="Cas1"/>
    <property type="match status" value="1"/>
</dbReference>
<dbReference type="InterPro" id="IPR002729">
    <property type="entry name" value="CRISPR-assoc_Cas1"/>
</dbReference>
<dbReference type="InterPro" id="IPR042206">
    <property type="entry name" value="CRISPR-assoc_Cas1_C"/>
</dbReference>
<dbReference type="InterPro" id="IPR019858">
    <property type="entry name" value="CRISPR-assoc_Cas1_HMARI/TNEAP"/>
</dbReference>
<dbReference type="InterPro" id="IPR042211">
    <property type="entry name" value="CRISPR-assoc_Cas1_N"/>
</dbReference>
<dbReference type="NCBIfam" id="TIGR00287">
    <property type="entry name" value="cas1"/>
    <property type="match status" value="1"/>
</dbReference>
<dbReference type="NCBIfam" id="TIGR03641">
    <property type="entry name" value="cas1_HMARI"/>
    <property type="match status" value="1"/>
</dbReference>
<dbReference type="PANTHER" id="PTHR43219">
    <property type="entry name" value="CRISPR-ASSOCIATED ENDONUCLEASE CAS1"/>
    <property type="match status" value="1"/>
</dbReference>
<dbReference type="PANTHER" id="PTHR43219:SF2">
    <property type="entry name" value="CRISPR-ASSOCIATED ENDONUCLEASE CAS1"/>
    <property type="match status" value="1"/>
</dbReference>
<dbReference type="Pfam" id="PF01867">
    <property type="entry name" value="Cas_Cas1"/>
    <property type="match status" value="1"/>
</dbReference>
<accession>O66692</accession>
<name>CAS1_AQUAE</name>
<protein>
    <recommendedName>
        <fullName evidence="1">CRISPR-associated endonuclease Cas1</fullName>
        <ecNumber evidence="1">3.1.-.-</ecNumber>
    </recommendedName>
</protein>
<keyword id="KW-0002">3D-structure</keyword>
<keyword id="KW-0051">Antiviral defense</keyword>
<keyword id="KW-0238">DNA-binding</keyword>
<keyword id="KW-0255">Endonuclease</keyword>
<keyword id="KW-0378">Hydrolase</keyword>
<keyword id="KW-0460">Magnesium</keyword>
<keyword id="KW-0464">Manganese</keyword>
<keyword id="KW-0479">Metal-binding</keyword>
<keyword id="KW-0540">Nuclease</keyword>
<keyword id="KW-1185">Reference proteome</keyword>
<sequence>MGRVYYINSHGTLSRHENTLRFENAEVKKDIPVEDVEEIFVFAELSLNTKLLNFLASKGIPLHFFNYYGYYTGTFYPRESSVSGHLLIKQVEHYLDAQKRLYLAKSFVIGSILNLEYVYKISADTYLNKVKETNSIPELMSVEAEFRKLCYKKLEEVTGWELEKRTKRPPQNPLNALISFGNSLTYAKVLGEIYKTQLNPTVSYLHEPSTKRFSLSLDVAEVFKPIFVDNLIIRLIQENKIDKTHFSTELNMTFLNEIGRKVFLKAFNELLETTIFYPKLNRKVSHRTLIKLELYKLIKHLLEEEVYLPLNYGGLK</sequence>
<gene>
    <name evidence="1" type="primary">cas1</name>
    <name type="ordered locus">aq_369</name>
</gene>
<organism>
    <name type="scientific">Aquifex aeolicus (strain VF5)</name>
    <dbReference type="NCBI Taxonomy" id="224324"/>
    <lineage>
        <taxon>Bacteria</taxon>
        <taxon>Pseudomonadati</taxon>
        <taxon>Aquificota</taxon>
        <taxon>Aquificia</taxon>
        <taxon>Aquificales</taxon>
        <taxon>Aquificaceae</taxon>
        <taxon>Aquifex</taxon>
    </lineage>
</organism>
<reference key="1">
    <citation type="journal article" date="1998" name="Nature">
        <title>The complete genome of the hyperthermophilic bacterium Aquifex aeolicus.</title>
        <authorList>
            <person name="Deckert G."/>
            <person name="Warren P.V."/>
            <person name="Gaasterland T."/>
            <person name="Young W.G."/>
            <person name="Lenox A.L."/>
            <person name="Graham D.E."/>
            <person name="Overbeek R."/>
            <person name="Snead M.A."/>
            <person name="Keller M."/>
            <person name="Aujay M."/>
            <person name="Huber R."/>
            <person name="Feldman R.A."/>
            <person name="Short J.M."/>
            <person name="Olsen G.J."/>
            <person name="Swanson R.V."/>
        </authorList>
    </citation>
    <scope>NUCLEOTIDE SEQUENCE [LARGE SCALE GENOMIC DNA]</scope>
    <source>
        <strain>VF5</strain>
    </source>
</reference>
<reference key="2">
    <citation type="submission" date="2007-05" db="PDB data bank">
        <title>Crystal structure of uncharacterized conserved protein from Aquifex aeolicus.</title>
        <authorList>
            <person name="Ebihara A."/>
            <person name="Yokoyama S."/>
            <person name="Kuramitsu S."/>
        </authorList>
    </citation>
    <scope>X-RAY CRYSTALLOGRAPHY (2.00 ANGSTROMS) OF 2-316</scope>
</reference>
<evidence type="ECO:0000255" key="1">
    <source>
        <dbReference type="HAMAP-Rule" id="MF_01470"/>
    </source>
</evidence>
<evidence type="ECO:0007829" key="2">
    <source>
        <dbReference type="PDB" id="2YZS"/>
    </source>
</evidence>
<comment type="function">
    <text evidence="1">CRISPR (clustered regularly interspaced short palindromic repeat), is an adaptive immune system that provides protection against mobile genetic elements (viruses, transposable elements and conjugative plasmids). CRISPR clusters contain spacers, sequences complementary to antecedent mobile elements, and target invading nucleic acids. CRISPR clusters are transcribed and processed into CRISPR RNA (crRNA). Acts as a dsDNA endonuclease. Involved in the integration of spacer DNA into the CRISPR cassette.</text>
</comment>
<comment type="cofactor">
    <cofactor evidence="1">
        <name>Mg(2+)</name>
        <dbReference type="ChEBI" id="CHEBI:18420"/>
    </cofactor>
    <cofactor evidence="1">
        <name>Mn(2+)</name>
        <dbReference type="ChEBI" id="CHEBI:29035"/>
    </cofactor>
</comment>
<comment type="subunit">
    <text evidence="1">Homodimer, forms a heterotetramer with a Cas2 homodimer.</text>
</comment>
<comment type="similarity">
    <text evidence="1">Belongs to the CRISPR-associated endonuclease Cas1 family.</text>
</comment>